<protein>
    <recommendedName>
        <fullName evidence="1">Pyridoxal kinase PdxY</fullName>
        <shortName evidence="1">PL kinase</shortName>
        <ecNumber evidence="1">2.7.1.35</ecNumber>
    </recommendedName>
</protein>
<proteinExistence type="inferred from homology"/>
<dbReference type="EC" id="2.7.1.35" evidence="1"/>
<dbReference type="EMBL" id="CP000790">
    <property type="protein sequence ID" value="ABU72745.1"/>
    <property type="molecule type" value="Genomic_DNA"/>
</dbReference>
<dbReference type="RefSeq" id="WP_011999144.1">
    <property type="nucleotide sequence ID" value="NC_009784.1"/>
</dbReference>
<dbReference type="SMR" id="A7N5Q6"/>
<dbReference type="KEGG" id="vha:VIBHAR_04836"/>
<dbReference type="PATRIC" id="fig|338187.25.peg.5352"/>
<dbReference type="UniPathway" id="UPA01068">
    <property type="reaction ID" value="UER00298"/>
</dbReference>
<dbReference type="Proteomes" id="UP000008152">
    <property type="component" value="Chromosome II"/>
</dbReference>
<dbReference type="GO" id="GO:0005829">
    <property type="term" value="C:cytosol"/>
    <property type="evidence" value="ECO:0007669"/>
    <property type="project" value="TreeGrafter"/>
</dbReference>
<dbReference type="GO" id="GO:0005524">
    <property type="term" value="F:ATP binding"/>
    <property type="evidence" value="ECO:0007669"/>
    <property type="project" value="UniProtKB-UniRule"/>
</dbReference>
<dbReference type="GO" id="GO:0000287">
    <property type="term" value="F:magnesium ion binding"/>
    <property type="evidence" value="ECO:0007669"/>
    <property type="project" value="UniProtKB-UniRule"/>
</dbReference>
<dbReference type="GO" id="GO:0008478">
    <property type="term" value="F:pyridoxal kinase activity"/>
    <property type="evidence" value="ECO:0007669"/>
    <property type="project" value="UniProtKB-UniRule"/>
</dbReference>
<dbReference type="GO" id="GO:0009443">
    <property type="term" value="P:pyridoxal 5'-phosphate salvage"/>
    <property type="evidence" value="ECO:0007669"/>
    <property type="project" value="UniProtKB-UniRule"/>
</dbReference>
<dbReference type="CDD" id="cd01173">
    <property type="entry name" value="pyridoxal_pyridoxamine_kinase"/>
    <property type="match status" value="1"/>
</dbReference>
<dbReference type="Gene3D" id="3.40.1190.20">
    <property type="match status" value="1"/>
</dbReference>
<dbReference type="HAMAP" id="MF_01639">
    <property type="entry name" value="PdxY"/>
    <property type="match status" value="1"/>
</dbReference>
<dbReference type="InterPro" id="IPR013749">
    <property type="entry name" value="PM/HMP-P_kinase-1"/>
</dbReference>
<dbReference type="InterPro" id="IPR004625">
    <property type="entry name" value="PyrdxlKinase"/>
</dbReference>
<dbReference type="InterPro" id="IPR023685">
    <property type="entry name" value="Pyridoxal_kinase_PdxY"/>
</dbReference>
<dbReference type="InterPro" id="IPR029056">
    <property type="entry name" value="Ribokinase-like"/>
</dbReference>
<dbReference type="NCBIfam" id="NF004398">
    <property type="entry name" value="PRK05756.1"/>
    <property type="match status" value="1"/>
</dbReference>
<dbReference type="NCBIfam" id="TIGR00687">
    <property type="entry name" value="pyridox_kin"/>
    <property type="match status" value="1"/>
</dbReference>
<dbReference type="PANTHER" id="PTHR10534">
    <property type="entry name" value="PYRIDOXAL KINASE"/>
    <property type="match status" value="1"/>
</dbReference>
<dbReference type="PANTHER" id="PTHR10534:SF2">
    <property type="entry name" value="PYRIDOXAL KINASE"/>
    <property type="match status" value="1"/>
</dbReference>
<dbReference type="Pfam" id="PF08543">
    <property type="entry name" value="Phos_pyr_kin"/>
    <property type="match status" value="1"/>
</dbReference>
<dbReference type="SUPFAM" id="SSF53613">
    <property type="entry name" value="Ribokinase-like"/>
    <property type="match status" value="1"/>
</dbReference>
<keyword id="KW-0067">ATP-binding</keyword>
<keyword id="KW-0418">Kinase</keyword>
<keyword id="KW-0460">Magnesium</keyword>
<keyword id="KW-0547">Nucleotide-binding</keyword>
<keyword id="KW-0808">Transferase</keyword>
<accession>A7N5Q6</accession>
<evidence type="ECO:0000255" key="1">
    <source>
        <dbReference type="HAMAP-Rule" id="MF_01639"/>
    </source>
</evidence>
<organism>
    <name type="scientific">Vibrio campbellii (strain ATCC BAA-1116)</name>
    <dbReference type="NCBI Taxonomy" id="2902295"/>
    <lineage>
        <taxon>Bacteria</taxon>
        <taxon>Pseudomonadati</taxon>
        <taxon>Pseudomonadota</taxon>
        <taxon>Gammaproteobacteria</taxon>
        <taxon>Vibrionales</taxon>
        <taxon>Vibrionaceae</taxon>
        <taxon>Vibrio</taxon>
    </lineage>
</organism>
<feature type="chain" id="PRO_1000069890" description="Pyridoxal kinase PdxY">
    <location>
        <begin position="1"/>
        <end position="289"/>
    </location>
</feature>
<feature type="binding site" evidence="1">
    <location>
        <position position="9"/>
    </location>
    <ligand>
        <name>substrate</name>
    </ligand>
</feature>
<feature type="binding site" evidence="1">
    <location>
        <begin position="44"/>
        <end position="45"/>
    </location>
    <ligand>
        <name>substrate</name>
    </ligand>
</feature>
<feature type="binding site" evidence="1">
    <location>
        <position position="112"/>
    </location>
    <ligand>
        <name>ATP</name>
        <dbReference type="ChEBI" id="CHEBI:30616"/>
    </ligand>
</feature>
<feature type="binding site" evidence="1">
    <location>
        <position position="144"/>
    </location>
    <ligand>
        <name>ATP</name>
        <dbReference type="ChEBI" id="CHEBI:30616"/>
    </ligand>
</feature>
<feature type="binding site" evidence="1">
    <location>
        <position position="149"/>
    </location>
    <ligand>
        <name>ATP</name>
        <dbReference type="ChEBI" id="CHEBI:30616"/>
    </ligand>
</feature>
<feature type="binding site" evidence="1">
    <location>
        <position position="182"/>
    </location>
    <ligand>
        <name>ATP</name>
        <dbReference type="ChEBI" id="CHEBI:30616"/>
    </ligand>
</feature>
<feature type="binding site" evidence="1">
    <location>
        <position position="221"/>
    </location>
    <ligand>
        <name>substrate</name>
    </ligand>
</feature>
<comment type="function">
    <text evidence="1">Pyridoxal kinase involved in the salvage pathway of pyridoxal 5'-phosphate (PLP). Catalyzes the phosphorylation of pyridoxal to PLP.</text>
</comment>
<comment type="catalytic activity">
    <reaction evidence="1">
        <text>pyridoxal + ATP = pyridoxal 5'-phosphate + ADP + H(+)</text>
        <dbReference type="Rhea" id="RHEA:10224"/>
        <dbReference type="ChEBI" id="CHEBI:15378"/>
        <dbReference type="ChEBI" id="CHEBI:17310"/>
        <dbReference type="ChEBI" id="CHEBI:30616"/>
        <dbReference type="ChEBI" id="CHEBI:456216"/>
        <dbReference type="ChEBI" id="CHEBI:597326"/>
        <dbReference type="EC" id="2.7.1.35"/>
    </reaction>
</comment>
<comment type="cofactor">
    <cofactor evidence="1">
        <name>Mg(2+)</name>
        <dbReference type="ChEBI" id="CHEBI:18420"/>
    </cofactor>
</comment>
<comment type="pathway">
    <text evidence="1">Cofactor metabolism; pyridoxal 5'-phosphate salvage; pyridoxal 5'-phosphate from pyridoxal: step 1/1.</text>
</comment>
<comment type="subunit">
    <text evidence="1">Homodimer.</text>
</comment>
<comment type="similarity">
    <text evidence="1">Belongs to the pyridoxine kinase family. PdxY subfamily.</text>
</comment>
<reference key="1">
    <citation type="submission" date="2007-08" db="EMBL/GenBank/DDBJ databases">
        <authorList>
            <consortium name="The Vibrio harveyi Genome Sequencing Project"/>
            <person name="Bassler B."/>
            <person name="Clifton S.W."/>
            <person name="Fulton L."/>
            <person name="Delehaunty K."/>
            <person name="Fronick C."/>
            <person name="Harrison M."/>
            <person name="Markivic C."/>
            <person name="Fulton R."/>
            <person name="Tin-Wollam A.-M."/>
            <person name="Shah N."/>
            <person name="Pepin K."/>
            <person name="Nash W."/>
            <person name="Thiruvilangam P."/>
            <person name="Bhonagiri V."/>
            <person name="Waters C."/>
            <person name="Tu K.C."/>
            <person name="Irgon J."/>
            <person name="Wilson R.K."/>
        </authorList>
    </citation>
    <scope>NUCLEOTIDE SEQUENCE [LARGE SCALE GENOMIC DNA]</scope>
    <source>
        <strain>ATCC BAA-1116 / BB120</strain>
    </source>
</reference>
<gene>
    <name evidence="1" type="primary">pdxY</name>
    <name type="ordered locus">VIBHAR_04836</name>
</gene>
<sequence>MQGILSIQSHVSFGHAGNSSAVFPMQRMGFEVWPIHTVQFSNHTQHQEGWTGRAFSADDISELVRGLGNIGALEKCQAVLTGYQGSAEQCLAVEDTVTKVKQANPEALYVCDPVMGAPDKGCIVAPGIAENLLNRLMPMADVIVPNQFELSQFAEMEIHTLDDAINACQRALAKGPKVVLVKHLYCLSDDSFNMLLATSEGTYLAKRPHFEFAKAPVGAGDLISAIFTAGLLKGWTPKQAFQHCHDACYGVLNATYQAGEWELQTIAAQQEFVEPSAHFPLEEVTLSQA</sequence>
<name>PDXY_VIBC1</name>